<feature type="chain" id="PRO_0000230031" description="Gamma-glutamyl phosphate reductase">
    <location>
        <begin position="1"/>
        <end position="414"/>
    </location>
</feature>
<name>PROA_XANC8</name>
<accession>Q4UVI0</accession>
<reference key="1">
    <citation type="journal article" date="2005" name="Genome Res.">
        <title>Comparative and functional genomic analyses of the pathogenicity of phytopathogen Xanthomonas campestris pv. campestris.</title>
        <authorList>
            <person name="Qian W."/>
            <person name="Jia Y."/>
            <person name="Ren S.-X."/>
            <person name="He Y.-Q."/>
            <person name="Feng J.-X."/>
            <person name="Lu L.-F."/>
            <person name="Sun Q."/>
            <person name="Ying G."/>
            <person name="Tang D.-J."/>
            <person name="Tang H."/>
            <person name="Wu W."/>
            <person name="Hao P."/>
            <person name="Wang L."/>
            <person name="Jiang B.-L."/>
            <person name="Zeng S."/>
            <person name="Gu W.-Y."/>
            <person name="Lu G."/>
            <person name="Rong L."/>
            <person name="Tian Y."/>
            <person name="Yao Z."/>
            <person name="Fu G."/>
            <person name="Chen B."/>
            <person name="Fang R."/>
            <person name="Qiang B."/>
            <person name="Chen Z."/>
            <person name="Zhao G.-P."/>
            <person name="Tang J.-L."/>
            <person name="He C."/>
        </authorList>
    </citation>
    <scope>NUCLEOTIDE SEQUENCE [LARGE SCALE GENOMIC DNA]</scope>
    <source>
        <strain>8004</strain>
    </source>
</reference>
<evidence type="ECO:0000255" key="1">
    <source>
        <dbReference type="HAMAP-Rule" id="MF_00412"/>
    </source>
</evidence>
<gene>
    <name evidence="1" type="primary">proA</name>
    <name type="ordered locus">XC_1880</name>
</gene>
<proteinExistence type="inferred from homology"/>
<protein>
    <recommendedName>
        <fullName evidence="1">Gamma-glutamyl phosphate reductase</fullName>
        <shortName evidence="1">GPR</shortName>
        <ecNumber evidence="1">1.2.1.41</ecNumber>
    </recommendedName>
    <alternativeName>
        <fullName evidence="1">Glutamate-5-semialdehyde dehydrogenase</fullName>
    </alternativeName>
    <alternativeName>
        <fullName evidence="1">Glutamyl-gamma-semialdehyde dehydrogenase</fullName>
        <shortName evidence="1">GSA dehydrogenase</shortName>
    </alternativeName>
</protein>
<sequence length="414" mass="43956">MTIKSLALQCRDAAQVLSQLSADAKQALLLAMANALDTDATQILQANQRDVDAAREKGTGAAMLDRLTLTPARLSAVGAALREVAVLPDPVGQVTRDDVRPNGIRVQKVRVPLGVIAMIYEARPNVTADAAALCIKAGNGVILRGGSEAIHSNTAIARALQRALREAGVPEAALTLVEDLRRETMLELLQLSDIVDLAIPRGGEGLIRFVAEHARVPVIKHYKGVCHLFVDASADVDLAVRLLVDGKASRPSACNSLETLLVHADIAERFLPAAAAALRARNVELRGDAATRAVLPEIAAASDDDYAAEFLDLILAIRVVPDLDTALAHIRQYGSDHTEVIATQTPANAETFVQSLRSAVVMVNASSRFSDGGELGLGAEIGISTTRLHSYGPMGLEALTVERFVVRGEGQVRH</sequence>
<comment type="function">
    <text evidence="1">Catalyzes the NADPH-dependent reduction of L-glutamate 5-phosphate into L-glutamate 5-semialdehyde and phosphate. The product spontaneously undergoes cyclization to form 1-pyrroline-5-carboxylate.</text>
</comment>
<comment type="catalytic activity">
    <reaction evidence="1">
        <text>L-glutamate 5-semialdehyde + phosphate + NADP(+) = L-glutamyl 5-phosphate + NADPH + H(+)</text>
        <dbReference type="Rhea" id="RHEA:19541"/>
        <dbReference type="ChEBI" id="CHEBI:15378"/>
        <dbReference type="ChEBI" id="CHEBI:43474"/>
        <dbReference type="ChEBI" id="CHEBI:57783"/>
        <dbReference type="ChEBI" id="CHEBI:58066"/>
        <dbReference type="ChEBI" id="CHEBI:58274"/>
        <dbReference type="ChEBI" id="CHEBI:58349"/>
        <dbReference type="EC" id="1.2.1.41"/>
    </reaction>
</comment>
<comment type="pathway">
    <text evidence="1">Amino-acid biosynthesis; L-proline biosynthesis; L-glutamate 5-semialdehyde from L-glutamate: step 2/2.</text>
</comment>
<comment type="subcellular location">
    <subcellularLocation>
        <location evidence="1">Cytoplasm</location>
    </subcellularLocation>
</comment>
<comment type="similarity">
    <text evidence="1">Belongs to the gamma-glutamyl phosphate reductase family.</text>
</comment>
<dbReference type="EC" id="1.2.1.41" evidence="1"/>
<dbReference type="EMBL" id="CP000050">
    <property type="protein sequence ID" value="AAY48943.1"/>
    <property type="molecule type" value="Genomic_DNA"/>
</dbReference>
<dbReference type="RefSeq" id="WP_011269668.1">
    <property type="nucleotide sequence ID" value="NZ_CP155948.1"/>
</dbReference>
<dbReference type="SMR" id="Q4UVI0"/>
<dbReference type="KEGG" id="xcb:XC_1880"/>
<dbReference type="HOGENOM" id="CLU_030231_0_0_6"/>
<dbReference type="UniPathway" id="UPA00098">
    <property type="reaction ID" value="UER00360"/>
</dbReference>
<dbReference type="Proteomes" id="UP000000420">
    <property type="component" value="Chromosome"/>
</dbReference>
<dbReference type="GO" id="GO:0005737">
    <property type="term" value="C:cytoplasm"/>
    <property type="evidence" value="ECO:0007669"/>
    <property type="project" value="UniProtKB-SubCell"/>
</dbReference>
<dbReference type="GO" id="GO:0004350">
    <property type="term" value="F:glutamate-5-semialdehyde dehydrogenase activity"/>
    <property type="evidence" value="ECO:0007669"/>
    <property type="project" value="UniProtKB-UniRule"/>
</dbReference>
<dbReference type="GO" id="GO:0050661">
    <property type="term" value="F:NADP binding"/>
    <property type="evidence" value="ECO:0007669"/>
    <property type="project" value="InterPro"/>
</dbReference>
<dbReference type="GO" id="GO:0055129">
    <property type="term" value="P:L-proline biosynthetic process"/>
    <property type="evidence" value="ECO:0007669"/>
    <property type="project" value="UniProtKB-UniRule"/>
</dbReference>
<dbReference type="CDD" id="cd07079">
    <property type="entry name" value="ALDH_F18-19_ProA-GPR"/>
    <property type="match status" value="1"/>
</dbReference>
<dbReference type="FunFam" id="3.40.309.10:FF:000006">
    <property type="entry name" value="Gamma-glutamyl phosphate reductase"/>
    <property type="match status" value="1"/>
</dbReference>
<dbReference type="Gene3D" id="3.40.605.10">
    <property type="entry name" value="Aldehyde Dehydrogenase, Chain A, domain 1"/>
    <property type="match status" value="1"/>
</dbReference>
<dbReference type="Gene3D" id="3.40.309.10">
    <property type="entry name" value="Aldehyde Dehydrogenase, Chain A, domain 2"/>
    <property type="match status" value="1"/>
</dbReference>
<dbReference type="HAMAP" id="MF_00412">
    <property type="entry name" value="ProA"/>
    <property type="match status" value="1"/>
</dbReference>
<dbReference type="InterPro" id="IPR016161">
    <property type="entry name" value="Ald_DH/histidinol_DH"/>
</dbReference>
<dbReference type="InterPro" id="IPR016163">
    <property type="entry name" value="Ald_DH_C"/>
</dbReference>
<dbReference type="InterPro" id="IPR016162">
    <property type="entry name" value="Ald_DH_N"/>
</dbReference>
<dbReference type="InterPro" id="IPR015590">
    <property type="entry name" value="Aldehyde_DH_dom"/>
</dbReference>
<dbReference type="InterPro" id="IPR020593">
    <property type="entry name" value="G-glutamylP_reductase_CS"/>
</dbReference>
<dbReference type="InterPro" id="IPR012134">
    <property type="entry name" value="Glu-5-SA_DH"/>
</dbReference>
<dbReference type="InterPro" id="IPR000965">
    <property type="entry name" value="GPR_dom"/>
</dbReference>
<dbReference type="NCBIfam" id="NF001221">
    <property type="entry name" value="PRK00197.1"/>
    <property type="match status" value="1"/>
</dbReference>
<dbReference type="NCBIfam" id="TIGR00407">
    <property type="entry name" value="proA"/>
    <property type="match status" value="1"/>
</dbReference>
<dbReference type="PANTHER" id="PTHR11063:SF8">
    <property type="entry name" value="DELTA-1-PYRROLINE-5-CARBOXYLATE SYNTHASE"/>
    <property type="match status" value="1"/>
</dbReference>
<dbReference type="PANTHER" id="PTHR11063">
    <property type="entry name" value="GLUTAMATE SEMIALDEHYDE DEHYDROGENASE"/>
    <property type="match status" value="1"/>
</dbReference>
<dbReference type="Pfam" id="PF00171">
    <property type="entry name" value="Aldedh"/>
    <property type="match status" value="1"/>
</dbReference>
<dbReference type="PIRSF" id="PIRSF000151">
    <property type="entry name" value="GPR"/>
    <property type="match status" value="1"/>
</dbReference>
<dbReference type="SUPFAM" id="SSF53720">
    <property type="entry name" value="ALDH-like"/>
    <property type="match status" value="1"/>
</dbReference>
<dbReference type="PROSITE" id="PS01223">
    <property type="entry name" value="PROA"/>
    <property type="match status" value="1"/>
</dbReference>
<keyword id="KW-0028">Amino-acid biosynthesis</keyword>
<keyword id="KW-0963">Cytoplasm</keyword>
<keyword id="KW-0521">NADP</keyword>
<keyword id="KW-0560">Oxidoreductase</keyword>
<keyword id="KW-0641">Proline biosynthesis</keyword>
<organism>
    <name type="scientific">Xanthomonas campestris pv. campestris (strain 8004)</name>
    <dbReference type="NCBI Taxonomy" id="314565"/>
    <lineage>
        <taxon>Bacteria</taxon>
        <taxon>Pseudomonadati</taxon>
        <taxon>Pseudomonadota</taxon>
        <taxon>Gammaproteobacteria</taxon>
        <taxon>Lysobacterales</taxon>
        <taxon>Lysobacteraceae</taxon>
        <taxon>Xanthomonas</taxon>
    </lineage>
</organism>